<gene>
    <name evidence="1" type="primary">plsX</name>
    <name type="ordered locus">Helmi_20920</name>
    <name type="ORF">HM1_2161</name>
</gene>
<organism>
    <name type="scientific">Heliobacterium modesticaldum (strain ATCC 51547 / Ice1)</name>
    <dbReference type="NCBI Taxonomy" id="498761"/>
    <lineage>
        <taxon>Bacteria</taxon>
        <taxon>Bacillati</taxon>
        <taxon>Bacillota</taxon>
        <taxon>Clostridia</taxon>
        <taxon>Eubacteriales</taxon>
        <taxon>Heliobacteriaceae</taxon>
        <taxon>Heliomicrobium</taxon>
    </lineage>
</organism>
<reference key="1">
    <citation type="journal article" date="2008" name="J. Bacteriol.">
        <title>The genome of Heliobacterium modesticaldum, a phototrophic representative of the Firmicutes containing the simplest photosynthetic apparatus.</title>
        <authorList>
            <person name="Sattley W.M."/>
            <person name="Madigan M.T."/>
            <person name="Swingley W.D."/>
            <person name="Cheung P.C."/>
            <person name="Clocksin K.M."/>
            <person name="Conrad A.L."/>
            <person name="Dejesa L.C."/>
            <person name="Honchak B.M."/>
            <person name="Jung D.O."/>
            <person name="Karbach L.E."/>
            <person name="Kurdoglu A."/>
            <person name="Lahiri S."/>
            <person name="Mastrian S.D."/>
            <person name="Page L.E."/>
            <person name="Taylor H.L."/>
            <person name="Wang Z.T."/>
            <person name="Raymond J."/>
            <person name="Chen M."/>
            <person name="Blankenship R.E."/>
            <person name="Touchman J.W."/>
        </authorList>
    </citation>
    <scope>NUCLEOTIDE SEQUENCE [LARGE SCALE GENOMIC DNA]</scope>
    <source>
        <strain>ATCC 51547 / Ice1</strain>
    </source>
</reference>
<feature type="chain" id="PRO_1000089911" description="Phosphate acyltransferase">
    <location>
        <begin position="1"/>
        <end position="335"/>
    </location>
</feature>
<sequence>MRIALDAMGGDHAPGEIVKGAIEAAEELHLQILLVGRPDAIEPLLKEASAGARSRLDIVAASEVIAMDESPATALRKKKDASIVVATRLVKEGRAQALVSAGSTGAQMAASLLGLGRISGIDRPAIATILPTLEGGKLLLDVGANSEAKPRNLLQFAHMGSIYAEKVMGIANPRVALLNIGEEETKGNELVLGAYGMLREAPLHFIGNVEGRDIFFGRADVIVCDGFVGNVVLKFGEGMVSALKTMIKDELKNSRMAQLGALLAAPALRGMGKRLDYAEYGGAPLLGVNGVSIICHGSSKAKAIKNALRVARQGVQQNFIAAIQEHIPGKVEPVC</sequence>
<comment type="function">
    <text evidence="1">Catalyzes the reversible formation of acyl-phosphate (acyl-PO(4)) from acyl-[acyl-carrier-protein] (acyl-ACP). This enzyme utilizes acyl-ACP as fatty acyl donor, but not acyl-CoA.</text>
</comment>
<comment type="catalytic activity">
    <reaction evidence="1">
        <text>a fatty acyl-[ACP] + phosphate = an acyl phosphate + holo-[ACP]</text>
        <dbReference type="Rhea" id="RHEA:42292"/>
        <dbReference type="Rhea" id="RHEA-COMP:9685"/>
        <dbReference type="Rhea" id="RHEA-COMP:14125"/>
        <dbReference type="ChEBI" id="CHEBI:43474"/>
        <dbReference type="ChEBI" id="CHEBI:59918"/>
        <dbReference type="ChEBI" id="CHEBI:64479"/>
        <dbReference type="ChEBI" id="CHEBI:138651"/>
        <dbReference type="EC" id="2.3.1.274"/>
    </reaction>
</comment>
<comment type="pathway">
    <text evidence="1">Lipid metabolism; phospholipid metabolism.</text>
</comment>
<comment type="subunit">
    <text evidence="1">Homodimer. Probably interacts with PlsY.</text>
</comment>
<comment type="subcellular location">
    <subcellularLocation>
        <location evidence="1">Cytoplasm</location>
    </subcellularLocation>
    <text evidence="1">Associated with the membrane possibly through PlsY.</text>
</comment>
<comment type="similarity">
    <text evidence="1">Belongs to the PlsX family.</text>
</comment>
<accession>B0TGV6</accession>
<proteinExistence type="inferred from homology"/>
<name>PLSX_HELMI</name>
<protein>
    <recommendedName>
        <fullName evidence="1">Phosphate acyltransferase</fullName>
        <ecNumber evidence="1">2.3.1.274</ecNumber>
    </recommendedName>
    <alternativeName>
        <fullName evidence="1">Acyl-ACP phosphotransacylase</fullName>
    </alternativeName>
    <alternativeName>
        <fullName evidence="1">Acyl-[acyl-carrier-protein]--phosphate acyltransferase</fullName>
    </alternativeName>
    <alternativeName>
        <fullName evidence="1">Phosphate-acyl-ACP acyltransferase</fullName>
    </alternativeName>
</protein>
<evidence type="ECO:0000255" key="1">
    <source>
        <dbReference type="HAMAP-Rule" id="MF_00019"/>
    </source>
</evidence>
<dbReference type="EC" id="2.3.1.274" evidence="1"/>
<dbReference type="EMBL" id="CP000930">
    <property type="protein sequence ID" value="ABZ84717.1"/>
    <property type="molecule type" value="Genomic_DNA"/>
</dbReference>
<dbReference type="RefSeq" id="WP_012283217.1">
    <property type="nucleotide sequence ID" value="NC_010337.2"/>
</dbReference>
<dbReference type="SMR" id="B0TGV6"/>
<dbReference type="STRING" id="498761.HM1_2161"/>
<dbReference type="KEGG" id="hmo:HM1_2161"/>
<dbReference type="eggNOG" id="COG0416">
    <property type="taxonomic scope" value="Bacteria"/>
</dbReference>
<dbReference type="HOGENOM" id="CLU_039379_1_1_9"/>
<dbReference type="UniPathway" id="UPA00085"/>
<dbReference type="Proteomes" id="UP000008550">
    <property type="component" value="Chromosome"/>
</dbReference>
<dbReference type="GO" id="GO:0005737">
    <property type="term" value="C:cytoplasm"/>
    <property type="evidence" value="ECO:0007669"/>
    <property type="project" value="UniProtKB-SubCell"/>
</dbReference>
<dbReference type="GO" id="GO:0043811">
    <property type="term" value="F:phosphate:acyl-[acyl carrier protein] acyltransferase activity"/>
    <property type="evidence" value="ECO:0007669"/>
    <property type="project" value="UniProtKB-UniRule"/>
</dbReference>
<dbReference type="GO" id="GO:0006633">
    <property type="term" value="P:fatty acid biosynthetic process"/>
    <property type="evidence" value="ECO:0007669"/>
    <property type="project" value="UniProtKB-UniRule"/>
</dbReference>
<dbReference type="GO" id="GO:0008654">
    <property type="term" value="P:phospholipid biosynthetic process"/>
    <property type="evidence" value="ECO:0007669"/>
    <property type="project" value="UniProtKB-KW"/>
</dbReference>
<dbReference type="Gene3D" id="3.40.718.10">
    <property type="entry name" value="Isopropylmalate Dehydrogenase"/>
    <property type="match status" value="1"/>
</dbReference>
<dbReference type="HAMAP" id="MF_00019">
    <property type="entry name" value="PlsX"/>
    <property type="match status" value="1"/>
</dbReference>
<dbReference type="InterPro" id="IPR003664">
    <property type="entry name" value="FA_synthesis"/>
</dbReference>
<dbReference type="InterPro" id="IPR012281">
    <property type="entry name" value="Phospholipid_synth_PlsX-like"/>
</dbReference>
<dbReference type="NCBIfam" id="TIGR00182">
    <property type="entry name" value="plsX"/>
    <property type="match status" value="1"/>
</dbReference>
<dbReference type="PANTHER" id="PTHR30100">
    <property type="entry name" value="FATTY ACID/PHOSPHOLIPID SYNTHESIS PROTEIN PLSX"/>
    <property type="match status" value="1"/>
</dbReference>
<dbReference type="PANTHER" id="PTHR30100:SF1">
    <property type="entry name" value="PHOSPHATE ACYLTRANSFERASE"/>
    <property type="match status" value="1"/>
</dbReference>
<dbReference type="Pfam" id="PF02504">
    <property type="entry name" value="FA_synthesis"/>
    <property type="match status" value="1"/>
</dbReference>
<dbReference type="PIRSF" id="PIRSF002465">
    <property type="entry name" value="Phsphlp_syn_PlsX"/>
    <property type="match status" value="1"/>
</dbReference>
<dbReference type="SUPFAM" id="SSF53659">
    <property type="entry name" value="Isocitrate/Isopropylmalate dehydrogenase-like"/>
    <property type="match status" value="1"/>
</dbReference>
<keyword id="KW-0963">Cytoplasm</keyword>
<keyword id="KW-0444">Lipid biosynthesis</keyword>
<keyword id="KW-0443">Lipid metabolism</keyword>
<keyword id="KW-0594">Phospholipid biosynthesis</keyword>
<keyword id="KW-1208">Phospholipid metabolism</keyword>
<keyword id="KW-1185">Reference proteome</keyword>
<keyword id="KW-0808">Transferase</keyword>